<organism>
    <name type="scientific">Yersinia pestis</name>
    <dbReference type="NCBI Taxonomy" id="632"/>
    <lineage>
        <taxon>Bacteria</taxon>
        <taxon>Pseudomonadati</taxon>
        <taxon>Pseudomonadota</taxon>
        <taxon>Gammaproteobacteria</taxon>
        <taxon>Enterobacterales</taxon>
        <taxon>Yersiniaceae</taxon>
        <taxon>Yersinia</taxon>
    </lineage>
</organism>
<sequence length="334" mass="37050">MIEADRLISAAVINDEESIDRAIRPKLLTEYVGQPHVREQMEIFIQAAKQRGDALDHVLIFGPPGLGKTTLANIIANEMGVNLRTTSGPVLEKAGDLAAMLTNLEPHDVLFIDEIHRLSPVVEEILYPAMEDYQLDIMIGEGPAARSIKLDLPPFTLIGATTRAGSLTSPLRDRFGIVQRLEFYQVADLEHIVSRSAKCLGLELTPEGAHQLARRSRGTPRITNRLLRRVRDFAEVRADGAINGEVAMKALDMLNVDAEGFDFMDRKLLLAVIDKFMGGPVGLDNLAAAIGEERETIEDVLEPYLIQQGFIQRTPRGRIATNHAYKHFGITREE</sequence>
<name>RUVB_YERPE</name>
<reference key="1">
    <citation type="journal article" date="2001" name="Nature">
        <title>Genome sequence of Yersinia pestis, the causative agent of plague.</title>
        <authorList>
            <person name="Parkhill J."/>
            <person name="Wren B.W."/>
            <person name="Thomson N.R."/>
            <person name="Titball R.W."/>
            <person name="Holden M.T.G."/>
            <person name="Prentice M.B."/>
            <person name="Sebaihia M."/>
            <person name="James K.D."/>
            <person name="Churcher C.M."/>
            <person name="Mungall K.L."/>
            <person name="Baker S."/>
            <person name="Basham D."/>
            <person name="Bentley S.D."/>
            <person name="Brooks K."/>
            <person name="Cerdeno-Tarraga A.-M."/>
            <person name="Chillingworth T."/>
            <person name="Cronin A."/>
            <person name="Davies R.M."/>
            <person name="Davis P."/>
            <person name="Dougan G."/>
            <person name="Feltwell T."/>
            <person name="Hamlin N."/>
            <person name="Holroyd S."/>
            <person name="Jagels K."/>
            <person name="Karlyshev A.V."/>
            <person name="Leather S."/>
            <person name="Moule S."/>
            <person name="Oyston P.C.F."/>
            <person name="Quail M.A."/>
            <person name="Rutherford K.M."/>
            <person name="Simmonds M."/>
            <person name="Skelton J."/>
            <person name="Stevens K."/>
            <person name="Whitehead S."/>
            <person name="Barrell B.G."/>
        </authorList>
    </citation>
    <scope>NUCLEOTIDE SEQUENCE [LARGE SCALE GENOMIC DNA]</scope>
    <source>
        <strain>CO-92 / Biovar Orientalis</strain>
    </source>
</reference>
<reference key="2">
    <citation type="journal article" date="2002" name="J. Bacteriol.">
        <title>Genome sequence of Yersinia pestis KIM.</title>
        <authorList>
            <person name="Deng W."/>
            <person name="Burland V."/>
            <person name="Plunkett G. III"/>
            <person name="Boutin A."/>
            <person name="Mayhew G.F."/>
            <person name="Liss P."/>
            <person name="Perna N.T."/>
            <person name="Rose D.J."/>
            <person name="Mau B."/>
            <person name="Zhou S."/>
            <person name="Schwartz D.C."/>
            <person name="Fetherston J.D."/>
            <person name="Lindler L.E."/>
            <person name="Brubaker R.R."/>
            <person name="Plano G.V."/>
            <person name="Straley S.C."/>
            <person name="McDonough K.A."/>
            <person name="Nilles M.L."/>
            <person name="Matson J.S."/>
            <person name="Blattner F.R."/>
            <person name="Perry R.D."/>
        </authorList>
    </citation>
    <scope>NUCLEOTIDE SEQUENCE [LARGE SCALE GENOMIC DNA]</scope>
    <source>
        <strain>KIM10+ / Biovar Mediaevalis</strain>
    </source>
</reference>
<reference key="3">
    <citation type="journal article" date="2004" name="DNA Res.">
        <title>Complete genome sequence of Yersinia pestis strain 91001, an isolate avirulent to humans.</title>
        <authorList>
            <person name="Song Y."/>
            <person name="Tong Z."/>
            <person name="Wang J."/>
            <person name="Wang L."/>
            <person name="Guo Z."/>
            <person name="Han Y."/>
            <person name="Zhang J."/>
            <person name="Pei D."/>
            <person name="Zhou D."/>
            <person name="Qin H."/>
            <person name="Pang X."/>
            <person name="Han Y."/>
            <person name="Zhai J."/>
            <person name="Li M."/>
            <person name="Cui B."/>
            <person name="Qi Z."/>
            <person name="Jin L."/>
            <person name="Dai R."/>
            <person name="Chen F."/>
            <person name="Li S."/>
            <person name="Ye C."/>
            <person name="Du Z."/>
            <person name="Lin W."/>
            <person name="Wang J."/>
            <person name="Yu J."/>
            <person name="Yang H."/>
            <person name="Wang J."/>
            <person name="Huang P."/>
            <person name="Yang R."/>
        </authorList>
    </citation>
    <scope>NUCLEOTIDE SEQUENCE [LARGE SCALE GENOMIC DNA]</scope>
    <source>
        <strain>91001 / Biovar Mediaevalis</strain>
    </source>
</reference>
<comment type="function">
    <text evidence="1">The RuvA-RuvB-RuvC complex processes Holliday junction (HJ) DNA during genetic recombination and DNA repair, while the RuvA-RuvB complex plays an important role in the rescue of blocked DNA replication forks via replication fork reversal (RFR). RuvA specifically binds to HJ cruciform DNA, conferring on it an open structure. The RuvB hexamer acts as an ATP-dependent pump, pulling dsDNA into and through the RuvAB complex. RuvB forms 2 homohexamers on either side of HJ DNA bound by 1 or 2 RuvA tetramers; 4 subunits per hexamer contact DNA at a time. Coordinated motions by a converter formed by DNA-disengaged RuvB subunits stimulates ATP hydrolysis and nucleotide exchange. Immobilization of the converter enables RuvB to convert the ATP-contained energy into a lever motion, pulling 2 nucleotides of DNA out of the RuvA tetramer per ATP hydrolyzed, thus driving DNA branch migration. The RuvB motors rotate together with the DNA substrate, which together with the progressing nucleotide cycle form the mechanistic basis for DNA recombination by continuous HJ branch migration. Branch migration allows RuvC to scan DNA until it finds its consensus sequence, where it cleaves and resolves cruciform DNA.</text>
</comment>
<comment type="catalytic activity">
    <reaction evidence="1">
        <text>ATP + H2O = ADP + phosphate + H(+)</text>
        <dbReference type="Rhea" id="RHEA:13065"/>
        <dbReference type="ChEBI" id="CHEBI:15377"/>
        <dbReference type="ChEBI" id="CHEBI:15378"/>
        <dbReference type="ChEBI" id="CHEBI:30616"/>
        <dbReference type="ChEBI" id="CHEBI:43474"/>
        <dbReference type="ChEBI" id="CHEBI:456216"/>
    </reaction>
</comment>
<comment type="subunit">
    <text evidence="1">Homohexamer. Forms an RuvA(8)-RuvB(12)-Holliday junction (HJ) complex. HJ DNA is sandwiched between 2 RuvA tetramers; dsDNA enters through RuvA and exits via RuvB. An RuvB hexamer assembles on each DNA strand where it exits the tetramer. Each RuvB hexamer is contacted by two RuvA subunits (via domain III) on 2 adjacent RuvB subunits; this complex drives branch migration. In the full resolvosome a probable DNA-RuvA(4)-RuvB(12)-RuvC(2) complex forms which resolves the HJ.</text>
</comment>
<comment type="subcellular location">
    <subcellularLocation>
        <location evidence="1">Cytoplasm</location>
    </subcellularLocation>
</comment>
<comment type="domain">
    <text evidence="1">Has 3 domains, the large (RuvB-L) and small ATPase (RuvB-S) domains and the C-terminal head (RuvB-H) domain. The head domain binds DNA, while the ATPase domains jointly bind ATP, ADP or are empty depending on the state of the subunit in the translocation cycle. During a single DNA translocation step the structure of each domain remains the same, but their relative positions change.</text>
</comment>
<comment type="similarity">
    <text evidence="1">Belongs to the RuvB family.</text>
</comment>
<feature type="chain" id="PRO_0000165637" description="Holliday junction branch migration complex subunit RuvB">
    <location>
        <begin position="1"/>
        <end position="334"/>
    </location>
</feature>
<feature type="region of interest" description="Large ATPase domain (RuvB-L)" evidence="1">
    <location>
        <begin position="4"/>
        <end position="184"/>
    </location>
</feature>
<feature type="region of interest" description="Small ATPAse domain (RuvB-S)" evidence="1">
    <location>
        <begin position="185"/>
        <end position="255"/>
    </location>
</feature>
<feature type="region of interest" description="Head domain (RuvB-H)" evidence="1">
    <location>
        <begin position="258"/>
        <end position="334"/>
    </location>
</feature>
<feature type="binding site" evidence="1">
    <location>
        <position position="23"/>
    </location>
    <ligand>
        <name>ATP</name>
        <dbReference type="ChEBI" id="CHEBI:30616"/>
    </ligand>
</feature>
<feature type="binding site" evidence="1">
    <location>
        <position position="24"/>
    </location>
    <ligand>
        <name>ATP</name>
        <dbReference type="ChEBI" id="CHEBI:30616"/>
    </ligand>
</feature>
<feature type="binding site" evidence="1">
    <location>
        <position position="65"/>
    </location>
    <ligand>
        <name>ATP</name>
        <dbReference type="ChEBI" id="CHEBI:30616"/>
    </ligand>
</feature>
<feature type="binding site" evidence="1">
    <location>
        <position position="68"/>
    </location>
    <ligand>
        <name>ATP</name>
        <dbReference type="ChEBI" id="CHEBI:30616"/>
    </ligand>
</feature>
<feature type="binding site" evidence="1">
    <location>
        <position position="69"/>
    </location>
    <ligand>
        <name>ATP</name>
        <dbReference type="ChEBI" id="CHEBI:30616"/>
    </ligand>
</feature>
<feature type="binding site" evidence="1">
    <location>
        <position position="69"/>
    </location>
    <ligand>
        <name>Mg(2+)</name>
        <dbReference type="ChEBI" id="CHEBI:18420"/>
    </ligand>
</feature>
<feature type="binding site" evidence="1">
    <location>
        <position position="70"/>
    </location>
    <ligand>
        <name>ATP</name>
        <dbReference type="ChEBI" id="CHEBI:30616"/>
    </ligand>
</feature>
<feature type="binding site" evidence="1">
    <location>
        <begin position="131"/>
        <end position="133"/>
    </location>
    <ligand>
        <name>ATP</name>
        <dbReference type="ChEBI" id="CHEBI:30616"/>
    </ligand>
</feature>
<feature type="binding site" evidence="1">
    <location>
        <position position="174"/>
    </location>
    <ligand>
        <name>ATP</name>
        <dbReference type="ChEBI" id="CHEBI:30616"/>
    </ligand>
</feature>
<feature type="binding site" evidence="1">
    <location>
        <position position="184"/>
    </location>
    <ligand>
        <name>ATP</name>
        <dbReference type="ChEBI" id="CHEBI:30616"/>
    </ligand>
</feature>
<feature type="binding site" evidence="1">
    <location>
        <position position="221"/>
    </location>
    <ligand>
        <name>ATP</name>
        <dbReference type="ChEBI" id="CHEBI:30616"/>
    </ligand>
</feature>
<feature type="binding site" evidence="1">
    <location>
        <position position="294"/>
    </location>
    <ligand>
        <name>DNA</name>
        <dbReference type="ChEBI" id="CHEBI:16991"/>
    </ligand>
</feature>
<feature type="binding site" evidence="1">
    <location>
        <position position="313"/>
    </location>
    <ligand>
        <name>DNA</name>
        <dbReference type="ChEBI" id="CHEBI:16991"/>
    </ligand>
</feature>
<feature type="binding site" evidence="1">
    <location>
        <position position="318"/>
    </location>
    <ligand>
        <name>DNA</name>
        <dbReference type="ChEBI" id="CHEBI:16991"/>
    </ligand>
</feature>
<accession>Q8ZEU5</accession>
<accession>Q0WF98</accession>
<gene>
    <name evidence="1" type="primary">ruvB</name>
    <name type="ordered locus">YPO2058</name>
    <name type="ordered locus">y2252</name>
    <name type="ordered locus">YP_1901</name>
</gene>
<proteinExistence type="inferred from homology"/>
<keyword id="KW-0067">ATP-binding</keyword>
<keyword id="KW-0963">Cytoplasm</keyword>
<keyword id="KW-0227">DNA damage</keyword>
<keyword id="KW-0233">DNA recombination</keyword>
<keyword id="KW-0234">DNA repair</keyword>
<keyword id="KW-0238">DNA-binding</keyword>
<keyword id="KW-0378">Hydrolase</keyword>
<keyword id="KW-0547">Nucleotide-binding</keyword>
<keyword id="KW-1185">Reference proteome</keyword>
<evidence type="ECO:0000255" key="1">
    <source>
        <dbReference type="HAMAP-Rule" id="MF_00016"/>
    </source>
</evidence>
<protein>
    <recommendedName>
        <fullName evidence="1">Holliday junction branch migration complex subunit RuvB</fullName>
        <ecNumber evidence="1">3.6.4.-</ecNumber>
    </recommendedName>
</protein>
<dbReference type="EC" id="3.6.4.-" evidence="1"/>
<dbReference type="EMBL" id="AL590842">
    <property type="protein sequence ID" value="CAL20693.1"/>
    <property type="molecule type" value="Genomic_DNA"/>
</dbReference>
<dbReference type="EMBL" id="AE009952">
    <property type="protein sequence ID" value="AAM85812.1"/>
    <property type="molecule type" value="Genomic_DNA"/>
</dbReference>
<dbReference type="EMBL" id="AE017042">
    <property type="protein sequence ID" value="AAS62119.1"/>
    <property type="molecule type" value="Genomic_DNA"/>
</dbReference>
<dbReference type="PIR" id="AB0251">
    <property type="entry name" value="AB0251"/>
</dbReference>
<dbReference type="RefSeq" id="WP_002211198.1">
    <property type="nucleotide sequence ID" value="NZ_WUCM01000062.1"/>
</dbReference>
<dbReference type="RefSeq" id="YP_002347040.1">
    <property type="nucleotide sequence ID" value="NC_003143.1"/>
</dbReference>
<dbReference type="SMR" id="Q8ZEU5"/>
<dbReference type="STRING" id="214092.YPO2058"/>
<dbReference type="PaxDb" id="214092-YPO2058"/>
<dbReference type="DNASU" id="1147199"/>
<dbReference type="EnsemblBacteria" id="AAS62119">
    <property type="protein sequence ID" value="AAS62119"/>
    <property type="gene ID" value="YP_1901"/>
</dbReference>
<dbReference type="GeneID" id="57976603"/>
<dbReference type="KEGG" id="ype:YPO2058"/>
<dbReference type="KEGG" id="ypk:y2252"/>
<dbReference type="KEGG" id="ypm:YP_1901"/>
<dbReference type="PATRIC" id="fig|214092.21.peg.2446"/>
<dbReference type="eggNOG" id="COG2255">
    <property type="taxonomic scope" value="Bacteria"/>
</dbReference>
<dbReference type="HOGENOM" id="CLU_055599_1_0_6"/>
<dbReference type="OMA" id="IHRMSRP"/>
<dbReference type="OrthoDB" id="9804478at2"/>
<dbReference type="Proteomes" id="UP000000815">
    <property type="component" value="Chromosome"/>
</dbReference>
<dbReference type="Proteomes" id="UP000001019">
    <property type="component" value="Chromosome"/>
</dbReference>
<dbReference type="Proteomes" id="UP000002490">
    <property type="component" value="Chromosome"/>
</dbReference>
<dbReference type="GO" id="GO:0005737">
    <property type="term" value="C:cytoplasm"/>
    <property type="evidence" value="ECO:0007669"/>
    <property type="project" value="UniProtKB-SubCell"/>
</dbReference>
<dbReference type="GO" id="GO:0048476">
    <property type="term" value="C:Holliday junction resolvase complex"/>
    <property type="evidence" value="ECO:0007669"/>
    <property type="project" value="UniProtKB-UniRule"/>
</dbReference>
<dbReference type="GO" id="GO:0005524">
    <property type="term" value="F:ATP binding"/>
    <property type="evidence" value="ECO:0007669"/>
    <property type="project" value="UniProtKB-UniRule"/>
</dbReference>
<dbReference type="GO" id="GO:0016887">
    <property type="term" value="F:ATP hydrolysis activity"/>
    <property type="evidence" value="ECO:0007669"/>
    <property type="project" value="InterPro"/>
</dbReference>
<dbReference type="GO" id="GO:0000400">
    <property type="term" value="F:four-way junction DNA binding"/>
    <property type="evidence" value="ECO:0007669"/>
    <property type="project" value="UniProtKB-UniRule"/>
</dbReference>
<dbReference type="GO" id="GO:0009378">
    <property type="term" value="F:four-way junction helicase activity"/>
    <property type="evidence" value="ECO:0007669"/>
    <property type="project" value="InterPro"/>
</dbReference>
<dbReference type="GO" id="GO:0006310">
    <property type="term" value="P:DNA recombination"/>
    <property type="evidence" value="ECO:0007669"/>
    <property type="project" value="UniProtKB-UniRule"/>
</dbReference>
<dbReference type="GO" id="GO:0006281">
    <property type="term" value="P:DNA repair"/>
    <property type="evidence" value="ECO:0007669"/>
    <property type="project" value="UniProtKB-UniRule"/>
</dbReference>
<dbReference type="CDD" id="cd00009">
    <property type="entry name" value="AAA"/>
    <property type="match status" value="1"/>
</dbReference>
<dbReference type="FunFam" id="1.10.10.10:FF:000086">
    <property type="entry name" value="Holliday junction ATP-dependent DNA helicase RuvB"/>
    <property type="match status" value="1"/>
</dbReference>
<dbReference type="FunFam" id="1.10.8.60:FF:000023">
    <property type="entry name" value="Holliday junction ATP-dependent DNA helicase RuvB"/>
    <property type="match status" value="1"/>
</dbReference>
<dbReference type="FunFam" id="3.40.50.300:FF:000073">
    <property type="entry name" value="Holliday junction ATP-dependent DNA helicase RuvB"/>
    <property type="match status" value="1"/>
</dbReference>
<dbReference type="Gene3D" id="1.10.8.60">
    <property type="match status" value="1"/>
</dbReference>
<dbReference type="Gene3D" id="3.40.50.300">
    <property type="entry name" value="P-loop containing nucleotide triphosphate hydrolases"/>
    <property type="match status" value="1"/>
</dbReference>
<dbReference type="Gene3D" id="1.10.10.10">
    <property type="entry name" value="Winged helix-like DNA-binding domain superfamily/Winged helix DNA-binding domain"/>
    <property type="match status" value="1"/>
</dbReference>
<dbReference type="HAMAP" id="MF_00016">
    <property type="entry name" value="DNA_HJ_migration_RuvB"/>
    <property type="match status" value="1"/>
</dbReference>
<dbReference type="InterPro" id="IPR003593">
    <property type="entry name" value="AAA+_ATPase"/>
</dbReference>
<dbReference type="InterPro" id="IPR041445">
    <property type="entry name" value="AAA_lid_4"/>
</dbReference>
<dbReference type="InterPro" id="IPR004605">
    <property type="entry name" value="DNA_helicase_Holl-junc_RuvB"/>
</dbReference>
<dbReference type="InterPro" id="IPR027417">
    <property type="entry name" value="P-loop_NTPase"/>
</dbReference>
<dbReference type="InterPro" id="IPR008824">
    <property type="entry name" value="RuvB-like_N"/>
</dbReference>
<dbReference type="InterPro" id="IPR008823">
    <property type="entry name" value="RuvB_C"/>
</dbReference>
<dbReference type="InterPro" id="IPR036388">
    <property type="entry name" value="WH-like_DNA-bd_sf"/>
</dbReference>
<dbReference type="InterPro" id="IPR036390">
    <property type="entry name" value="WH_DNA-bd_sf"/>
</dbReference>
<dbReference type="NCBIfam" id="NF000868">
    <property type="entry name" value="PRK00080.1"/>
    <property type="match status" value="1"/>
</dbReference>
<dbReference type="NCBIfam" id="TIGR00635">
    <property type="entry name" value="ruvB"/>
    <property type="match status" value="1"/>
</dbReference>
<dbReference type="PANTHER" id="PTHR42848">
    <property type="match status" value="1"/>
</dbReference>
<dbReference type="PANTHER" id="PTHR42848:SF1">
    <property type="entry name" value="HOLLIDAY JUNCTION BRANCH MIGRATION COMPLEX SUBUNIT RUVB"/>
    <property type="match status" value="1"/>
</dbReference>
<dbReference type="Pfam" id="PF17864">
    <property type="entry name" value="AAA_lid_4"/>
    <property type="match status" value="1"/>
</dbReference>
<dbReference type="Pfam" id="PF05491">
    <property type="entry name" value="RuvB_C"/>
    <property type="match status" value="1"/>
</dbReference>
<dbReference type="Pfam" id="PF05496">
    <property type="entry name" value="RuvB_N"/>
    <property type="match status" value="1"/>
</dbReference>
<dbReference type="SMART" id="SM00382">
    <property type="entry name" value="AAA"/>
    <property type="match status" value="1"/>
</dbReference>
<dbReference type="SUPFAM" id="SSF52540">
    <property type="entry name" value="P-loop containing nucleoside triphosphate hydrolases"/>
    <property type="match status" value="1"/>
</dbReference>
<dbReference type="SUPFAM" id="SSF46785">
    <property type="entry name" value="Winged helix' DNA-binding domain"/>
    <property type="match status" value="1"/>
</dbReference>